<reference key="1">
    <citation type="journal article" date="2013" name="Nature">
        <title>The zebrafish reference genome sequence and its relationship to the human genome.</title>
        <authorList>
            <person name="Howe K."/>
            <person name="Clark M.D."/>
            <person name="Torroja C.F."/>
            <person name="Torrance J."/>
            <person name="Berthelot C."/>
            <person name="Muffato M."/>
            <person name="Collins J.E."/>
            <person name="Humphray S."/>
            <person name="McLaren K."/>
            <person name="Matthews L."/>
            <person name="McLaren S."/>
            <person name="Sealy I."/>
            <person name="Caccamo M."/>
            <person name="Churcher C."/>
            <person name="Scott C."/>
            <person name="Barrett J.C."/>
            <person name="Koch R."/>
            <person name="Rauch G.J."/>
            <person name="White S."/>
            <person name="Chow W."/>
            <person name="Kilian B."/>
            <person name="Quintais L.T."/>
            <person name="Guerra-Assuncao J.A."/>
            <person name="Zhou Y."/>
            <person name="Gu Y."/>
            <person name="Yen J."/>
            <person name="Vogel J.H."/>
            <person name="Eyre T."/>
            <person name="Redmond S."/>
            <person name="Banerjee R."/>
            <person name="Chi J."/>
            <person name="Fu B."/>
            <person name="Langley E."/>
            <person name="Maguire S.F."/>
            <person name="Laird G.K."/>
            <person name="Lloyd D."/>
            <person name="Kenyon E."/>
            <person name="Donaldson S."/>
            <person name="Sehra H."/>
            <person name="Almeida-King J."/>
            <person name="Loveland J."/>
            <person name="Trevanion S."/>
            <person name="Jones M."/>
            <person name="Quail M."/>
            <person name="Willey D."/>
            <person name="Hunt A."/>
            <person name="Burton J."/>
            <person name="Sims S."/>
            <person name="McLay K."/>
            <person name="Plumb B."/>
            <person name="Davis J."/>
            <person name="Clee C."/>
            <person name="Oliver K."/>
            <person name="Clark R."/>
            <person name="Riddle C."/>
            <person name="Elliot D."/>
            <person name="Threadgold G."/>
            <person name="Harden G."/>
            <person name="Ware D."/>
            <person name="Begum S."/>
            <person name="Mortimore B."/>
            <person name="Kerry G."/>
            <person name="Heath P."/>
            <person name="Phillimore B."/>
            <person name="Tracey A."/>
            <person name="Corby N."/>
            <person name="Dunn M."/>
            <person name="Johnson C."/>
            <person name="Wood J."/>
            <person name="Clark S."/>
            <person name="Pelan S."/>
            <person name="Griffiths G."/>
            <person name="Smith M."/>
            <person name="Glithero R."/>
            <person name="Howden P."/>
            <person name="Barker N."/>
            <person name="Lloyd C."/>
            <person name="Stevens C."/>
            <person name="Harley J."/>
            <person name="Holt K."/>
            <person name="Panagiotidis G."/>
            <person name="Lovell J."/>
            <person name="Beasley H."/>
            <person name="Henderson C."/>
            <person name="Gordon D."/>
            <person name="Auger K."/>
            <person name="Wright D."/>
            <person name="Collins J."/>
            <person name="Raisen C."/>
            <person name="Dyer L."/>
            <person name="Leung K."/>
            <person name="Robertson L."/>
            <person name="Ambridge K."/>
            <person name="Leongamornlert D."/>
            <person name="McGuire S."/>
            <person name="Gilderthorp R."/>
            <person name="Griffiths C."/>
            <person name="Manthravadi D."/>
            <person name="Nichol S."/>
            <person name="Barker G."/>
            <person name="Whitehead S."/>
            <person name="Kay M."/>
            <person name="Brown J."/>
            <person name="Murnane C."/>
            <person name="Gray E."/>
            <person name="Humphries M."/>
            <person name="Sycamore N."/>
            <person name="Barker D."/>
            <person name="Saunders D."/>
            <person name="Wallis J."/>
            <person name="Babbage A."/>
            <person name="Hammond S."/>
            <person name="Mashreghi-Mohammadi M."/>
            <person name="Barr L."/>
            <person name="Martin S."/>
            <person name="Wray P."/>
            <person name="Ellington A."/>
            <person name="Matthews N."/>
            <person name="Ellwood M."/>
            <person name="Woodmansey R."/>
            <person name="Clark G."/>
            <person name="Cooper J."/>
            <person name="Tromans A."/>
            <person name="Grafham D."/>
            <person name="Skuce C."/>
            <person name="Pandian R."/>
            <person name="Andrews R."/>
            <person name="Harrison E."/>
            <person name="Kimberley A."/>
            <person name="Garnett J."/>
            <person name="Fosker N."/>
            <person name="Hall R."/>
            <person name="Garner P."/>
            <person name="Kelly D."/>
            <person name="Bird C."/>
            <person name="Palmer S."/>
            <person name="Gehring I."/>
            <person name="Berger A."/>
            <person name="Dooley C.M."/>
            <person name="Ersan-Urun Z."/>
            <person name="Eser C."/>
            <person name="Geiger H."/>
            <person name="Geisler M."/>
            <person name="Karotki L."/>
            <person name="Kirn A."/>
            <person name="Konantz J."/>
            <person name="Konantz M."/>
            <person name="Oberlander M."/>
            <person name="Rudolph-Geiger S."/>
            <person name="Teucke M."/>
            <person name="Lanz C."/>
            <person name="Raddatz G."/>
            <person name="Osoegawa K."/>
            <person name="Zhu B."/>
            <person name="Rapp A."/>
            <person name="Widaa S."/>
            <person name="Langford C."/>
            <person name="Yang F."/>
            <person name="Schuster S.C."/>
            <person name="Carter N.P."/>
            <person name="Harrow J."/>
            <person name="Ning Z."/>
            <person name="Herrero J."/>
            <person name="Searle S.M."/>
            <person name="Enright A."/>
            <person name="Geisler R."/>
            <person name="Plasterk R.H."/>
            <person name="Lee C."/>
            <person name="Westerfield M."/>
            <person name="de Jong P.J."/>
            <person name="Zon L.I."/>
            <person name="Postlethwait J.H."/>
            <person name="Nusslein-Volhard C."/>
            <person name="Hubbard T.J."/>
            <person name="Roest Crollius H."/>
            <person name="Rogers J."/>
            <person name="Stemple D.L."/>
        </authorList>
    </citation>
    <scope>NUCLEOTIDE SEQUENCE [LARGE SCALE GENOMIC DNA]</scope>
    <source>
        <strain>Tuebingen</strain>
    </source>
</reference>
<gene>
    <name type="primary">nhsl3</name>
    <name type="ORF">si:ch211-194e15.5</name>
</gene>
<accession>Q1LWM5</accession>
<dbReference type="EMBL" id="BX547927">
    <property type="protein sequence ID" value="CAK04281.1"/>
    <property type="molecule type" value="Genomic_DNA"/>
</dbReference>
<dbReference type="RefSeq" id="NP_001076559.1">
    <property type="nucleotide sequence ID" value="NM_001083090.1"/>
</dbReference>
<dbReference type="FunCoup" id="Q1LWM5">
    <property type="interactions" value="1183"/>
</dbReference>
<dbReference type="PaxDb" id="7955-ENSDARP00000083006"/>
<dbReference type="Ensembl" id="ENSDART00000137633">
    <property type="protein sequence ID" value="ENSDARP00000120879"/>
    <property type="gene ID" value="ENSDARG00000061804"/>
</dbReference>
<dbReference type="GeneID" id="100034579"/>
<dbReference type="KEGG" id="dre:100034579"/>
<dbReference type="AGR" id="ZFIN:ZDB-GENE-060503-393"/>
<dbReference type="CTD" id="57648"/>
<dbReference type="ZFIN" id="ZDB-GENE-060503-393">
    <property type="gene designation" value="nhsl3"/>
</dbReference>
<dbReference type="eggNOG" id="ENOG502QV6M">
    <property type="taxonomic scope" value="Eukaryota"/>
</dbReference>
<dbReference type="HOGENOM" id="CLU_004158_0_0_1"/>
<dbReference type="InParanoid" id="Q1LWM5"/>
<dbReference type="OMA" id="LLCRHKS"/>
<dbReference type="OrthoDB" id="9948858at2759"/>
<dbReference type="PRO" id="PR:Q1LWM5"/>
<dbReference type="Proteomes" id="UP000000437">
    <property type="component" value="Alternate scaffold 19"/>
</dbReference>
<dbReference type="Proteomes" id="UP000000437">
    <property type="component" value="Chromosome 19"/>
</dbReference>
<dbReference type="Bgee" id="ENSDARG00000061804">
    <property type="expression patterns" value="Expressed in swim bladder and 18 other cell types or tissues"/>
</dbReference>
<dbReference type="GO" id="GO:0030154">
    <property type="term" value="P:cell differentiation"/>
    <property type="evidence" value="ECO:0000318"/>
    <property type="project" value="GO_Central"/>
</dbReference>
<dbReference type="InterPro" id="IPR024845">
    <property type="entry name" value="NHS-like"/>
</dbReference>
<dbReference type="PANTHER" id="PTHR23039">
    <property type="entry name" value="NANCE-HORAN SYNDROME PROTEIN"/>
    <property type="match status" value="1"/>
</dbReference>
<dbReference type="PANTHER" id="PTHR23039:SF6">
    <property type="entry name" value="SIMILAR TO MKIAA1522 PROTEIN"/>
    <property type="match status" value="1"/>
</dbReference>
<dbReference type="Pfam" id="PF15273">
    <property type="entry name" value="NHS"/>
    <property type="match status" value="1"/>
</dbReference>
<keyword id="KW-0175">Coiled coil</keyword>
<keyword id="KW-1185">Reference proteome</keyword>
<sequence length="1325" mass="145305">MVVFLSKNVRSLLSIFKKKGQKQDEQRKLTVHYTASQHYQENVFIEGSRPKYLEDLHTEAQEGLKILQQEEEDTSSKERNESLENDSTSGHSIISVSTASAVSTRPVLTRQGSTFKPLNPVKRLDKSKRRSRRTTIMGIPQQVQRELDMARGTMLQQLPNRGHDSEDDSSGTVVLQTIDGDLPSVNHEGARVHLQNIEVLQASRDEDLLLNHIHSVYQDELNRKLGLGACPTQRPKSLAVPGMTTYSFLQEPQGPVMSISPQATYLSKIIPNAVLPAAIDIIEINHDHNRCSASTASKGSMASASPSSSRSGSGTNQAPPTTSPSRSNSQSSETIVSNSSTISSKGKCLPTFDADSAKDISVLIPKDMSVSSSSSWKSSEGKGTNHRLNPREYGDAGDNVRNSHSFSRSLSVMKTKLPPAPPQRTYSLHHENMQRQREQGDIQDPKDVAPNNNEQTNRDISSTKENHQSAKNKKSSVHSLELRSDFHTTVKSSPLSPDQVFTGRHARSGNSSPQKTRECGENFDRTLSPSSGYSSQSGTPTHSPKEVSPSSPGKRRVKPSKPERVCAKTSPVVSVSSSLTSLSSVISDTAHQDIQTNTTSSEPLKFSPPLTTVKNKVTPTHQTIALRTLFNIPPPPKVKAPSPPPPETWVQNKQTLELLCGPGPNIHKLESLISKTQNKNSMQINEQVIPKTQTTEETKTENTVVKELTKSASPQVHKQMMVEPPDVRHTEKSILHNELKSPETLAKVNQIPHTQDEKTIEDQKDRWSQTLPTTNVPSIIVDQSMLSQTNSIEKTKAATVSSNENQRNCIVTDIVNRISVQTLNIEVPEVNGVSPPPSPPPEHHPPPPPIKKMSDMSVSIPPSEKEEQKQVEQVTFPESSWPPPPPPMEESTELMFEEQDELDFPPPPPSFIHEPMSEISDDFHEESCEEVSIKLLSTNVSDMDSSPEQDSERHTILPKRIVQNSVEVRQQDKSSDSVSEFLEDQAEIENTNVASTIISSHLPDKNLHEKETLVSTSIPLAPPLPVEEQSTINFRKQLSFVDKDNRSKELLCRHKSTPIPKEDANIPLVTPSLLQMVRLRSVNVGEDQVNNDSKPSTEPTTNEDHSISSQVTPQKPIRRSLTLKSNSPAKSSSASSAVPSMCLQEAIRMKTAAMSCSGVPAMLNLRSSSGSSATSPVPSPKSPDGCDLLMSPASTASFIFSKSTKRVVIETPTSPDVQASLKQSLAAEIMQVSDQAKTMITNGTKKPIKVPPPVAKKPVHGSNPPNKMENATQDKTEILTNKQIMRVDVNGQSDQVHPAGQRAQSLGNQEQASKEAFAMNMSICA</sequence>
<comment type="function">
    <text evidence="1">Able to directly activate the TNF-NFkappaB signaling pathway.</text>
</comment>
<proteinExistence type="inferred from homology"/>
<name>NHSL3_DANRE</name>
<organism>
    <name type="scientific">Danio rerio</name>
    <name type="common">Zebrafish</name>
    <name type="synonym">Brachydanio rerio</name>
    <dbReference type="NCBI Taxonomy" id="7955"/>
    <lineage>
        <taxon>Eukaryota</taxon>
        <taxon>Metazoa</taxon>
        <taxon>Chordata</taxon>
        <taxon>Craniata</taxon>
        <taxon>Vertebrata</taxon>
        <taxon>Euteleostomi</taxon>
        <taxon>Actinopterygii</taxon>
        <taxon>Neopterygii</taxon>
        <taxon>Teleostei</taxon>
        <taxon>Ostariophysi</taxon>
        <taxon>Cypriniformes</taxon>
        <taxon>Danionidae</taxon>
        <taxon>Danioninae</taxon>
        <taxon>Danio</taxon>
    </lineage>
</organism>
<evidence type="ECO:0000250" key="1">
    <source>
        <dbReference type="UniProtKB" id="Q9P206"/>
    </source>
</evidence>
<evidence type="ECO:0000255" key="2"/>
<evidence type="ECO:0000256" key="3">
    <source>
        <dbReference type="SAM" id="MobiDB-lite"/>
    </source>
</evidence>
<protein>
    <recommendedName>
        <fullName>NHS-like protein 3</fullName>
    </recommendedName>
</protein>
<feature type="chain" id="PRO_0000311248" description="NHS-like protein 3">
    <location>
        <begin position="1"/>
        <end position="1325"/>
    </location>
</feature>
<feature type="region of interest" description="Disordered" evidence="3">
    <location>
        <begin position="68"/>
        <end position="92"/>
    </location>
</feature>
<feature type="region of interest" description="Disordered" evidence="3">
    <location>
        <begin position="111"/>
        <end position="131"/>
    </location>
</feature>
<feature type="region of interest" description="Disordered" evidence="3">
    <location>
        <begin position="291"/>
        <end position="348"/>
    </location>
</feature>
<feature type="region of interest" description="Disordered" evidence="3">
    <location>
        <begin position="368"/>
        <end position="570"/>
    </location>
</feature>
<feature type="region of interest" description="Disordered" evidence="3">
    <location>
        <begin position="595"/>
        <end position="614"/>
    </location>
</feature>
<feature type="region of interest" description="Disordered" evidence="3">
    <location>
        <begin position="829"/>
        <end position="891"/>
    </location>
</feature>
<feature type="region of interest" description="Disordered" evidence="3">
    <location>
        <begin position="935"/>
        <end position="981"/>
    </location>
</feature>
<feature type="region of interest" description="Disordered" evidence="3">
    <location>
        <begin position="1084"/>
        <end position="1138"/>
    </location>
</feature>
<feature type="region of interest" description="Disordered" evidence="3">
    <location>
        <begin position="1243"/>
        <end position="1272"/>
    </location>
</feature>
<feature type="region of interest" description="Disordered" evidence="3">
    <location>
        <begin position="1293"/>
        <end position="1313"/>
    </location>
</feature>
<feature type="coiled-coil region" evidence="2">
    <location>
        <begin position="53"/>
        <end position="85"/>
    </location>
</feature>
<feature type="compositionally biased region" description="Low complexity" evidence="3">
    <location>
        <begin position="296"/>
        <end position="334"/>
    </location>
</feature>
<feature type="compositionally biased region" description="Polar residues" evidence="3">
    <location>
        <begin position="335"/>
        <end position="344"/>
    </location>
</feature>
<feature type="compositionally biased region" description="Low complexity" evidence="3">
    <location>
        <begin position="369"/>
        <end position="378"/>
    </location>
</feature>
<feature type="compositionally biased region" description="Polar residues" evidence="3">
    <location>
        <begin position="400"/>
        <end position="412"/>
    </location>
</feature>
<feature type="compositionally biased region" description="Basic and acidic residues" evidence="3">
    <location>
        <begin position="428"/>
        <end position="447"/>
    </location>
</feature>
<feature type="compositionally biased region" description="Polar residues" evidence="3">
    <location>
        <begin position="450"/>
        <end position="460"/>
    </location>
</feature>
<feature type="compositionally biased region" description="Basic and acidic residues" evidence="3">
    <location>
        <begin position="515"/>
        <end position="524"/>
    </location>
</feature>
<feature type="compositionally biased region" description="Low complexity" evidence="3">
    <location>
        <begin position="528"/>
        <end position="541"/>
    </location>
</feature>
<feature type="compositionally biased region" description="Pro residues" evidence="3">
    <location>
        <begin position="834"/>
        <end position="850"/>
    </location>
</feature>
<feature type="compositionally biased region" description="Polar residues" evidence="3">
    <location>
        <begin position="935"/>
        <end position="948"/>
    </location>
</feature>
<feature type="compositionally biased region" description="Polar residues" evidence="3">
    <location>
        <begin position="1088"/>
        <end position="1100"/>
    </location>
</feature>
<feature type="compositionally biased region" description="Low complexity" evidence="3">
    <location>
        <begin position="1124"/>
        <end position="1138"/>
    </location>
</feature>
<feature type="compositionally biased region" description="Polar residues" evidence="3">
    <location>
        <begin position="1302"/>
        <end position="1311"/>
    </location>
</feature>